<name>PANB_SYNR3</name>
<organism>
    <name type="scientific">Synechococcus sp. (strain RCC307)</name>
    <dbReference type="NCBI Taxonomy" id="316278"/>
    <lineage>
        <taxon>Bacteria</taxon>
        <taxon>Bacillati</taxon>
        <taxon>Cyanobacteriota</taxon>
        <taxon>Cyanophyceae</taxon>
        <taxon>Synechococcales</taxon>
        <taxon>Synechococcaceae</taxon>
        <taxon>Synechococcus</taxon>
    </lineage>
</organism>
<protein>
    <recommendedName>
        <fullName evidence="1">3-methyl-2-oxobutanoate hydroxymethyltransferase</fullName>
        <ecNumber evidence="1">2.1.2.11</ecNumber>
    </recommendedName>
    <alternativeName>
        <fullName evidence="1">Ketopantoate hydroxymethyltransferase</fullName>
        <shortName evidence="1">KPHMT</shortName>
    </alternativeName>
</protein>
<dbReference type="EC" id="2.1.2.11" evidence="1"/>
<dbReference type="EMBL" id="CT978603">
    <property type="protein sequence ID" value="CAK27502.1"/>
    <property type="molecule type" value="Genomic_DNA"/>
</dbReference>
<dbReference type="SMR" id="A5GRJ3"/>
<dbReference type="STRING" id="316278.SynRCC307_0599"/>
<dbReference type="KEGG" id="syr:SynRCC307_0599"/>
<dbReference type="eggNOG" id="COG0413">
    <property type="taxonomic scope" value="Bacteria"/>
</dbReference>
<dbReference type="HOGENOM" id="CLU_036645_1_0_3"/>
<dbReference type="OrthoDB" id="9781789at2"/>
<dbReference type="UniPathway" id="UPA00028">
    <property type="reaction ID" value="UER00003"/>
</dbReference>
<dbReference type="Proteomes" id="UP000001115">
    <property type="component" value="Chromosome"/>
</dbReference>
<dbReference type="GO" id="GO:0005737">
    <property type="term" value="C:cytoplasm"/>
    <property type="evidence" value="ECO:0007669"/>
    <property type="project" value="UniProtKB-SubCell"/>
</dbReference>
<dbReference type="GO" id="GO:0003864">
    <property type="term" value="F:3-methyl-2-oxobutanoate hydroxymethyltransferase activity"/>
    <property type="evidence" value="ECO:0007669"/>
    <property type="project" value="UniProtKB-UniRule"/>
</dbReference>
<dbReference type="GO" id="GO:0000287">
    <property type="term" value="F:magnesium ion binding"/>
    <property type="evidence" value="ECO:0007669"/>
    <property type="project" value="TreeGrafter"/>
</dbReference>
<dbReference type="GO" id="GO:0015940">
    <property type="term" value="P:pantothenate biosynthetic process"/>
    <property type="evidence" value="ECO:0007669"/>
    <property type="project" value="UniProtKB-UniRule"/>
</dbReference>
<dbReference type="CDD" id="cd06557">
    <property type="entry name" value="KPHMT-like"/>
    <property type="match status" value="1"/>
</dbReference>
<dbReference type="FunFam" id="3.20.20.60:FF:000003">
    <property type="entry name" value="3-methyl-2-oxobutanoate hydroxymethyltransferase"/>
    <property type="match status" value="1"/>
</dbReference>
<dbReference type="Gene3D" id="3.20.20.60">
    <property type="entry name" value="Phosphoenolpyruvate-binding domains"/>
    <property type="match status" value="1"/>
</dbReference>
<dbReference type="HAMAP" id="MF_00156">
    <property type="entry name" value="PanB"/>
    <property type="match status" value="1"/>
</dbReference>
<dbReference type="InterPro" id="IPR003700">
    <property type="entry name" value="Pantoate_hydroxy_MeTrfase"/>
</dbReference>
<dbReference type="InterPro" id="IPR015813">
    <property type="entry name" value="Pyrv/PenolPyrv_kinase-like_dom"/>
</dbReference>
<dbReference type="InterPro" id="IPR040442">
    <property type="entry name" value="Pyrv_kinase-like_dom_sf"/>
</dbReference>
<dbReference type="NCBIfam" id="TIGR00222">
    <property type="entry name" value="panB"/>
    <property type="match status" value="1"/>
</dbReference>
<dbReference type="NCBIfam" id="NF001452">
    <property type="entry name" value="PRK00311.1"/>
    <property type="match status" value="1"/>
</dbReference>
<dbReference type="PANTHER" id="PTHR20881">
    <property type="entry name" value="3-METHYL-2-OXOBUTANOATE HYDROXYMETHYLTRANSFERASE"/>
    <property type="match status" value="1"/>
</dbReference>
<dbReference type="PANTHER" id="PTHR20881:SF0">
    <property type="entry name" value="3-METHYL-2-OXOBUTANOATE HYDROXYMETHYLTRANSFERASE"/>
    <property type="match status" value="1"/>
</dbReference>
<dbReference type="Pfam" id="PF02548">
    <property type="entry name" value="Pantoate_transf"/>
    <property type="match status" value="1"/>
</dbReference>
<dbReference type="PIRSF" id="PIRSF000388">
    <property type="entry name" value="Pantoate_hydroxy_MeTrfase"/>
    <property type="match status" value="1"/>
</dbReference>
<dbReference type="SUPFAM" id="SSF51621">
    <property type="entry name" value="Phosphoenolpyruvate/pyruvate domain"/>
    <property type="match status" value="1"/>
</dbReference>
<accession>A5GRJ3</accession>
<sequence>MSLTPRQLGEQLRQRKQRRQPIAVLTAWDALSASWAEAAGVDLVLVGDSLAMVALGHATTLPVTLEAMVQHTAAVERGLRHTPIVSDLPFLSYQCGPDQAVAAAGRFLKETGCAGVKLEGGEPETIAVIDRLVRSGIPVMGHLGLTPQSVHQLGYRRQATDPVAQERLWQRALELQQTGCFALVLEHVPAELATRLSAELSVPVIGIGAGEGCDGQVRVSADLLGLTPQQPPFSPALLDGRELFSQALRQWVQGVQSAPVPPANHSAPHC</sequence>
<keyword id="KW-0963">Cytoplasm</keyword>
<keyword id="KW-0460">Magnesium</keyword>
<keyword id="KW-0479">Metal-binding</keyword>
<keyword id="KW-0566">Pantothenate biosynthesis</keyword>
<keyword id="KW-1185">Reference proteome</keyword>
<keyword id="KW-0808">Transferase</keyword>
<gene>
    <name evidence="1" type="primary">panB</name>
    <name type="ordered locus">SynRCC307_0599</name>
</gene>
<comment type="function">
    <text evidence="1">Catalyzes the reversible reaction in which hydroxymethyl group from 5,10-methylenetetrahydrofolate is transferred onto alpha-ketoisovalerate to form ketopantoate.</text>
</comment>
<comment type="catalytic activity">
    <reaction evidence="1">
        <text>3-methyl-2-oxobutanoate + (6R)-5,10-methylene-5,6,7,8-tetrahydrofolate + H2O = 2-dehydropantoate + (6S)-5,6,7,8-tetrahydrofolate</text>
        <dbReference type="Rhea" id="RHEA:11824"/>
        <dbReference type="ChEBI" id="CHEBI:11561"/>
        <dbReference type="ChEBI" id="CHEBI:11851"/>
        <dbReference type="ChEBI" id="CHEBI:15377"/>
        <dbReference type="ChEBI" id="CHEBI:15636"/>
        <dbReference type="ChEBI" id="CHEBI:57453"/>
        <dbReference type="EC" id="2.1.2.11"/>
    </reaction>
</comment>
<comment type="cofactor">
    <cofactor evidence="1">
        <name>Mg(2+)</name>
        <dbReference type="ChEBI" id="CHEBI:18420"/>
    </cofactor>
    <text evidence="1">Binds 1 Mg(2+) ion per subunit.</text>
</comment>
<comment type="pathway">
    <text evidence="1">Cofactor biosynthesis; (R)-pantothenate biosynthesis; (R)-pantoate from 3-methyl-2-oxobutanoate: step 1/2.</text>
</comment>
<comment type="subunit">
    <text evidence="1">Homodecamer; pentamer of dimers.</text>
</comment>
<comment type="subcellular location">
    <subcellularLocation>
        <location evidence="1">Cytoplasm</location>
    </subcellularLocation>
</comment>
<comment type="similarity">
    <text evidence="1">Belongs to the PanB family.</text>
</comment>
<proteinExistence type="inferred from homology"/>
<reference key="1">
    <citation type="submission" date="2006-05" db="EMBL/GenBank/DDBJ databases">
        <authorList>
            <consortium name="Genoscope"/>
        </authorList>
    </citation>
    <scope>NUCLEOTIDE SEQUENCE [LARGE SCALE GENOMIC DNA]</scope>
    <source>
        <strain>RCC307</strain>
    </source>
</reference>
<evidence type="ECO:0000255" key="1">
    <source>
        <dbReference type="HAMAP-Rule" id="MF_00156"/>
    </source>
</evidence>
<feature type="chain" id="PRO_1000071533" description="3-methyl-2-oxobutanoate hydroxymethyltransferase">
    <location>
        <begin position="1"/>
        <end position="270"/>
    </location>
</feature>
<feature type="active site" description="Proton acceptor" evidence="1">
    <location>
        <position position="186"/>
    </location>
</feature>
<feature type="binding site" evidence="1">
    <location>
        <begin position="48"/>
        <end position="49"/>
    </location>
    <ligand>
        <name>3-methyl-2-oxobutanoate</name>
        <dbReference type="ChEBI" id="CHEBI:11851"/>
    </ligand>
</feature>
<feature type="binding site" evidence="1">
    <location>
        <position position="48"/>
    </location>
    <ligand>
        <name>Mg(2+)</name>
        <dbReference type="ChEBI" id="CHEBI:18420"/>
    </ligand>
</feature>
<feature type="binding site" evidence="1">
    <location>
        <position position="87"/>
    </location>
    <ligand>
        <name>3-methyl-2-oxobutanoate</name>
        <dbReference type="ChEBI" id="CHEBI:11851"/>
    </ligand>
</feature>
<feature type="binding site" evidence="1">
    <location>
        <position position="87"/>
    </location>
    <ligand>
        <name>Mg(2+)</name>
        <dbReference type="ChEBI" id="CHEBI:18420"/>
    </ligand>
</feature>
<feature type="binding site" evidence="1">
    <location>
        <position position="117"/>
    </location>
    <ligand>
        <name>3-methyl-2-oxobutanoate</name>
        <dbReference type="ChEBI" id="CHEBI:11851"/>
    </ligand>
</feature>
<feature type="binding site" evidence="1">
    <location>
        <position position="119"/>
    </location>
    <ligand>
        <name>Mg(2+)</name>
        <dbReference type="ChEBI" id="CHEBI:18420"/>
    </ligand>
</feature>